<dbReference type="EC" id="5.6.1.7" evidence="1"/>
<dbReference type="EMBL" id="AF032910">
    <property type="protein sequence ID" value="AAB86965.1"/>
    <property type="molecule type" value="Genomic_DNA"/>
</dbReference>
<dbReference type="EMBL" id="AE010300">
    <property type="protein sequence ID" value="AAN49854.1"/>
    <property type="molecule type" value="Genomic_DNA"/>
</dbReference>
<dbReference type="RefSeq" id="NP_712836.1">
    <property type="nucleotide sequence ID" value="NC_004342.2"/>
</dbReference>
<dbReference type="RefSeq" id="WP_001029966.1">
    <property type="nucleotide sequence ID" value="NC_004342.2"/>
</dbReference>
<dbReference type="SMR" id="P61439"/>
<dbReference type="FunCoup" id="P61439">
    <property type="interactions" value="622"/>
</dbReference>
<dbReference type="STRING" id="189518.LA_2655"/>
<dbReference type="PaxDb" id="189518-LA_2655"/>
<dbReference type="EnsemblBacteria" id="AAN49854">
    <property type="protein sequence ID" value="AAN49854"/>
    <property type="gene ID" value="LA_2655"/>
</dbReference>
<dbReference type="KEGG" id="lil:LA_2655"/>
<dbReference type="PATRIC" id="fig|189518.3.peg.2637"/>
<dbReference type="HOGENOM" id="CLU_016503_3_0_12"/>
<dbReference type="InParanoid" id="P61439"/>
<dbReference type="OrthoDB" id="9766614at2"/>
<dbReference type="Proteomes" id="UP000001408">
    <property type="component" value="Chromosome I"/>
</dbReference>
<dbReference type="GO" id="GO:1990220">
    <property type="term" value="C:GroEL-GroES complex"/>
    <property type="evidence" value="ECO:0000318"/>
    <property type="project" value="GO_Central"/>
</dbReference>
<dbReference type="GO" id="GO:0005524">
    <property type="term" value="F:ATP binding"/>
    <property type="evidence" value="ECO:0000318"/>
    <property type="project" value="GO_Central"/>
</dbReference>
<dbReference type="GO" id="GO:0140662">
    <property type="term" value="F:ATP-dependent protein folding chaperone"/>
    <property type="evidence" value="ECO:0007669"/>
    <property type="project" value="InterPro"/>
</dbReference>
<dbReference type="GO" id="GO:0016853">
    <property type="term" value="F:isomerase activity"/>
    <property type="evidence" value="ECO:0007669"/>
    <property type="project" value="UniProtKB-KW"/>
</dbReference>
<dbReference type="GO" id="GO:0051082">
    <property type="term" value="F:unfolded protein binding"/>
    <property type="evidence" value="ECO:0000318"/>
    <property type="project" value="GO_Central"/>
</dbReference>
<dbReference type="GO" id="GO:0051085">
    <property type="term" value="P:chaperone cofactor-dependent protein refolding"/>
    <property type="evidence" value="ECO:0000318"/>
    <property type="project" value="GO_Central"/>
</dbReference>
<dbReference type="GO" id="GO:0042026">
    <property type="term" value="P:protein refolding"/>
    <property type="evidence" value="ECO:0007669"/>
    <property type="project" value="UniProtKB-UniRule"/>
</dbReference>
<dbReference type="GO" id="GO:0009408">
    <property type="term" value="P:response to heat"/>
    <property type="evidence" value="ECO:0000318"/>
    <property type="project" value="GO_Central"/>
</dbReference>
<dbReference type="CDD" id="cd03344">
    <property type="entry name" value="GroEL"/>
    <property type="match status" value="1"/>
</dbReference>
<dbReference type="FunFam" id="3.50.7.10:FF:000001">
    <property type="entry name" value="60 kDa chaperonin"/>
    <property type="match status" value="1"/>
</dbReference>
<dbReference type="Gene3D" id="3.50.7.10">
    <property type="entry name" value="GroEL"/>
    <property type="match status" value="1"/>
</dbReference>
<dbReference type="Gene3D" id="1.10.560.10">
    <property type="entry name" value="GroEL-like equatorial domain"/>
    <property type="match status" value="1"/>
</dbReference>
<dbReference type="Gene3D" id="3.30.260.10">
    <property type="entry name" value="TCP-1-like chaperonin intermediate domain"/>
    <property type="match status" value="1"/>
</dbReference>
<dbReference type="HAMAP" id="MF_00600">
    <property type="entry name" value="CH60"/>
    <property type="match status" value="1"/>
</dbReference>
<dbReference type="InterPro" id="IPR018370">
    <property type="entry name" value="Chaperonin_Cpn60_CS"/>
</dbReference>
<dbReference type="InterPro" id="IPR001844">
    <property type="entry name" value="Cpn60/GroEL"/>
</dbReference>
<dbReference type="InterPro" id="IPR002423">
    <property type="entry name" value="Cpn60/GroEL/TCP-1"/>
</dbReference>
<dbReference type="InterPro" id="IPR027409">
    <property type="entry name" value="GroEL-like_apical_dom_sf"/>
</dbReference>
<dbReference type="InterPro" id="IPR027413">
    <property type="entry name" value="GROEL-like_equatorial_sf"/>
</dbReference>
<dbReference type="InterPro" id="IPR027410">
    <property type="entry name" value="TCP-1-like_intermed_sf"/>
</dbReference>
<dbReference type="NCBIfam" id="TIGR02348">
    <property type="entry name" value="GroEL"/>
    <property type="match status" value="1"/>
</dbReference>
<dbReference type="NCBIfam" id="NF000592">
    <property type="entry name" value="PRK00013.1"/>
    <property type="match status" value="1"/>
</dbReference>
<dbReference type="NCBIfam" id="NF009487">
    <property type="entry name" value="PRK12849.1"/>
    <property type="match status" value="1"/>
</dbReference>
<dbReference type="NCBIfam" id="NF009488">
    <property type="entry name" value="PRK12850.1"/>
    <property type="match status" value="1"/>
</dbReference>
<dbReference type="NCBIfam" id="NF009489">
    <property type="entry name" value="PRK12851.1"/>
    <property type="match status" value="1"/>
</dbReference>
<dbReference type="PANTHER" id="PTHR45633">
    <property type="entry name" value="60 KDA HEAT SHOCK PROTEIN, MITOCHONDRIAL"/>
    <property type="match status" value="1"/>
</dbReference>
<dbReference type="Pfam" id="PF00118">
    <property type="entry name" value="Cpn60_TCP1"/>
    <property type="match status" value="1"/>
</dbReference>
<dbReference type="PRINTS" id="PR00298">
    <property type="entry name" value="CHAPERONIN60"/>
</dbReference>
<dbReference type="SUPFAM" id="SSF52029">
    <property type="entry name" value="GroEL apical domain-like"/>
    <property type="match status" value="1"/>
</dbReference>
<dbReference type="SUPFAM" id="SSF48592">
    <property type="entry name" value="GroEL equatorial domain-like"/>
    <property type="match status" value="1"/>
</dbReference>
<dbReference type="SUPFAM" id="SSF54849">
    <property type="entry name" value="GroEL-intermediate domain like"/>
    <property type="match status" value="1"/>
</dbReference>
<dbReference type="PROSITE" id="PS00296">
    <property type="entry name" value="CHAPERONINS_CPN60"/>
    <property type="match status" value="1"/>
</dbReference>
<reference key="1">
    <citation type="submission" date="1997-11" db="EMBL/GenBank/DDBJ databases">
        <authorList>
            <person name="Kim M.-J."/>
            <person name="Ahn B.-Y."/>
        </authorList>
    </citation>
    <scope>NUCLEOTIDE SEQUENCE [GENOMIC DNA]</scope>
    <source>
        <strain>HY-1 / Serogroup Icterohaemorrhagiae / Serovar lai</strain>
    </source>
</reference>
<reference key="2">
    <citation type="journal article" date="2003" name="Nature">
        <title>Unique physiological and pathogenic features of Leptospira interrogans revealed by whole-genome sequencing.</title>
        <authorList>
            <person name="Ren S.-X."/>
            <person name="Fu G."/>
            <person name="Jiang X.-G."/>
            <person name="Zeng R."/>
            <person name="Miao Y.-G."/>
            <person name="Xu H."/>
            <person name="Zhang Y.-X."/>
            <person name="Xiong H."/>
            <person name="Lu G."/>
            <person name="Lu L.-F."/>
            <person name="Jiang H.-Q."/>
            <person name="Jia J."/>
            <person name="Tu Y.-F."/>
            <person name="Jiang J.-X."/>
            <person name="Gu W.-Y."/>
            <person name="Zhang Y.-Q."/>
            <person name="Cai Z."/>
            <person name="Sheng H.-H."/>
            <person name="Yin H.-F."/>
            <person name="Zhang Y."/>
            <person name="Zhu G.-F."/>
            <person name="Wan M."/>
            <person name="Huang H.-L."/>
            <person name="Qian Z."/>
            <person name="Wang S.-Y."/>
            <person name="Ma W."/>
            <person name="Yao Z.-J."/>
            <person name="Shen Y."/>
            <person name="Qiang B.-Q."/>
            <person name="Xia Q.-C."/>
            <person name="Guo X.-K."/>
            <person name="Danchin A."/>
            <person name="Saint Girons I."/>
            <person name="Somerville R.L."/>
            <person name="Wen Y.-M."/>
            <person name="Shi M.-H."/>
            <person name="Chen Z."/>
            <person name="Xu J.-G."/>
            <person name="Zhao G.-P."/>
        </authorList>
    </citation>
    <scope>NUCLEOTIDE SEQUENCE [LARGE SCALE GENOMIC DNA]</scope>
    <source>
        <strain>56601</strain>
    </source>
</reference>
<accession>P61439</accession>
<accession>O31198</accession>
<accession>P35468</accession>
<sequence>MAKDIEYNETARRKLLEGVNKLANAVKVTLGPKGRNVVIDKKFGAPTITKDGVTVAKEIELEDPLENMGAQMVKEVSTKTNDVAGDGTTTATILAQSIINEGLKNVTAGANPMSLKRGIDKAVTAAVESIQKRAVKIENKKDIANVASISANNDNTIGNLIADAMDKVGKDGVITVEEAKSIETTLDVVEGMQFDRGYISPYMVTDAESMVATLNDPFILIYDKKISSMKDLIHILEKVAQAGKPLVIISEEVEGEALATIVVNTLRKTISCVAVKAPGFGDRRKSMLEDIAILTGGQVISEDLGMKLENTTLQMLGRANKVTVDKENTTIIEGKGQTKEIQGRIGQIKKQIEDTTSEYDREKLQERLAKLAGGVAVIHVGAATEVEMKEKKARVEDALSATRAAVEEGIVPGGGLTLLKAQEAVGSLKLDGDEATGAKIIFRALEEPIRMITSNAGLEGSVIVEHAKAKKGNEGFNALTMVWEDMIQAGVVDPAKVVRSALQNAASIGSMILTTEVTITDKPDKDAPNPMAGMGGGGMGGMGGMM</sequence>
<evidence type="ECO:0000255" key="1">
    <source>
        <dbReference type="HAMAP-Rule" id="MF_00600"/>
    </source>
</evidence>
<comment type="function">
    <text evidence="1">Together with its co-chaperonin GroES, plays an essential role in assisting protein folding. The GroEL-GroES system forms a nano-cage that allows encapsulation of the non-native substrate proteins and provides a physical environment optimized to promote and accelerate protein folding.</text>
</comment>
<comment type="catalytic activity">
    <reaction evidence="1">
        <text>ATP + H2O + a folded polypeptide = ADP + phosphate + an unfolded polypeptide.</text>
        <dbReference type="EC" id="5.6.1.7"/>
    </reaction>
</comment>
<comment type="subunit">
    <text evidence="1">Forms a cylinder of 14 subunits composed of two heptameric rings stacked back-to-back. Interacts with the co-chaperonin GroES.</text>
</comment>
<comment type="subcellular location">
    <subcellularLocation>
        <location evidence="1">Cytoplasm</location>
    </subcellularLocation>
</comment>
<comment type="similarity">
    <text evidence="1">Belongs to the chaperonin (HSP60) family.</text>
</comment>
<organism>
    <name type="scientific">Leptospira interrogans serogroup Icterohaemorrhagiae serovar Lai (strain 56601)</name>
    <dbReference type="NCBI Taxonomy" id="189518"/>
    <lineage>
        <taxon>Bacteria</taxon>
        <taxon>Pseudomonadati</taxon>
        <taxon>Spirochaetota</taxon>
        <taxon>Spirochaetia</taxon>
        <taxon>Leptospirales</taxon>
        <taxon>Leptospiraceae</taxon>
        <taxon>Leptospira</taxon>
    </lineage>
</organism>
<proteinExistence type="inferred from homology"/>
<feature type="chain" id="PRO_0000063411" description="Chaperonin GroEL">
    <location>
        <begin position="1"/>
        <end position="546"/>
    </location>
</feature>
<feature type="binding site" evidence="1">
    <location>
        <begin position="29"/>
        <end position="32"/>
    </location>
    <ligand>
        <name>ATP</name>
        <dbReference type="ChEBI" id="CHEBI:30616"/>
    </ligand>
</feature>
<feature type="binding site" evidence="1">
    <location>
        <position position="50"/>
    </location>
    <ligand>
        <name>ATP</name>
        <dbReference type="ChEBI" id="CHEBI:30616"/>
    </ligand>
</feature>
<feature type="binding site" evidence="1">
    <location>
        <begin position="86"/>
        <end position="90"/>
    </location>
    <ligand>
        <name>ATP</name>
        <dbReference type="ChEBI" id="CHEBI:30616"/>
    </ligand>
</feature>
<feature type="binding site" evidence="1">
    <location>
        <position position="414"/>
    </location>
    <ligand>
        <name>ATP</name>
        <dbReference type="ChEBI" id="CHEBI:30616"/>
    </ligand>
</feature>
<feature type="binding site" evidence="1">
    <location>
        <begin position="477"/>
        <end position="479"/>
    </location>
    <ligand>
        <name>ATP</name>
        <dbReference type="ChEBI" id="CHEBI:30616"/>
    </ligand>
</feature>
<feature type="binding site" evidence="1">
    <location>
        <position position="493"/>
    </location>
    <ligand>
        <name>ATP</name>
        <dbReference type="ChEBI" id="CHEBI:30616"/>
    </ligand>
</feature>
<protein>
    <recommendedName>
        <fullName evidence="1">Chaperonin GroEL</fullName>
        <ecNumber evidence="1">5.6.1.7</ecNumber>
    </recommendedName>
    <alternativeName>
        <fullName evidence="1">60 kDa chaperonin</fullName>
    </alternativeName>
    <alternativeName>
        <fullName evidence="1">Chaperonin-60</fullName>
        <shortName evidence="1">Cpn60</shortName>
    </alternativeName>
</protein>
<gene>
    <name evidence="1" type="primary">groEL</name>
    <name evidence="1" type="synonym">groL</name>
    <name type="synonym">hsp58</name>
    <name type="synonym">mopA</name>
    <name type="ordered locus">LA_2655</name>
</gene>
<keyword id="KW-0067">ATP-binding</keyword>
<keyword id="KW-0143">Chaperone</keyword>
<keyword id="KW-0963">Cytoplasm</keyword>
<keyword id="KW-0413">Isomerase</keyword>
<keyword id="KW-0547">Nucleotide-binding</keyword>
<keyword id="KW-1185">Reference proteome</keyword>
<keyword id="KW-0346">Stress response</keyword>
<name>CH60_LEPIN</name>